<evidence type="ECO:0000250" key="1">
    <source>
        <dbReference type="UniProtKB" id="B6D5I7"/>
    </source>
</evidence>
<evidence type="ECO:0000250" key="2">
    <source>
        <dbReference type="UniProtKB" id="P04798"/>
    </source>
</evidence>
<evidence type="ECO:0000255" key="3"/>
<evidence type="ECO:0000255" key="4">
    <source>
        <dbReference type="PROSITE-ProRule" id="PRU00498"/>
    </source>
</evidence>
<evidence type="ECO:0000269" key="5">
    <source>
    </source>
</evidence>
<evidence type="ECO:0000269" key="6">
    <source>
    </source>
</evidence>
<evidence type="ECO:0000269" key="7">
    <source>
    </source>
</evidence>
<evidence type="ECO:0000269" key="8">
    <source>
    </source>
</evidence>
<evidence type="ECO:0000269" key="9">
    <source>
    </source>
</evidence>
<evidence type="ECO:0000269" key="10">
    <source>
    </source>
</evidence>
<evidence type="ECO:0000269" key="11">
    <source>
    </source>
</evidence>
<evidence type="ECO:0000269" key="12">
    <source>
    </source>
</evidence>
<evidence type="ECO:0000303" key="13">
    <source>
    </source>
</evidence>
<evidence type="ECO:0000305" key="14"/>
<evidence type="ECO:0000305" key="15">
    <source>
    </source>
</evidence>
<keyword id="KW-0017">Alkaloid metabolism</keyword>
<keyword id="KW-0325">Glycoprotein</keyword>
<keyword id="KW-0349">Heme</keyword>
<keyword id="KW-0408">Iron</keyword>
<keyword id="KW-0472">Membrane</keyword>
<keyword id="KW-0479">Metal-binding</keyword>
<keyword id="KW-0503">Monooxygenase</keyword>
<keyword id="KW-0560">Oxidoreductase</keyword>
<keyword id="KW-1185">Reference proteome</keyword>
<keyword id="KW-0812">Transmembrane</keyword>
<keyword id="KW-1133">Transmembrane helix</keyword>
<name>EASM_ASPFU</name>
<comment type="function">
    <text evidence="1 5 6 8 9 10 11 12">Cytochrome P450 monooxygenase; part of the gene cluster that mediates the biosynthesis of fumiclavanine C, a fungal ergot alkaloid (PubMed:15933009, PubMed:26972831). DmaW catalyzes the first step of ergot alkaloid biosynthesis by condensing dimethylallyl diphosphate (DMAP) and tryptophan to form 4-dimethylallyl-L-tryptophan (PubMed:15870460). The second step is catalyzed by the methyltransferase easF that methylates 4-dimethylallyl-L-tryptophan in the presence of S-adenosyl-L-methionine, resulting in the formation of 4-dimethylallyl-L-abrine (By similarity). The catalase easC and the FAD-dependent oxidoreductase easE then transform 4-dimethylallyl-L-abrine to chanoclavine-I which is further oxidized by EasD in the presence of NAD(+), resulting in the formation of chanoclavine-I aldehyde (PubMed:20039019, PubMed:20526482, PubMed:21409592). EasA reduces chanoclavine-I aldehyde to dihydrochanoclavine-I aldehyde that spontaneously dehydrates to form 6,8-dimethyl-6,7-didehydroergoline (PubMed:20526482). EasG then catalyzes the reduction of 6,8-dimethyl-6,7-didehydroergoline to form festuclavine (PubMed:20526482). Hydrolysis of festuclavine by easM then leads to the formation of fumigaclavine B which is in turn acetylated by easN to fumigaclavine A (PubMed:26972831). Finally, easL catalyzes the conversion of fumigaclavine A into fumigaclavine C by attaching a dimethylallyl moiety to C-2 of the indole nucleus (PubMed:19672909).</text>
</comment>
<comment type="cofactor">
    <cofactor evidence="2">
        <name>heme</name>
        <dbReference type="ChEBI" id="CHEBI:30413"/>
    </cofactor>
</comment>
<comment type="pathway">
    <text evidence="12">Alkaloid biosynthesis; ergot alkaloid biosynthesis.</text>
</comment>
<comment type="subcellular location">
    <subcellularLocation>
        <location evidence="3">Membrane</location>
        <topology evidence="3">Single-pass membrane protein</topology>
    </subcellularLocation>
</comment>
<comment type="induction">
    <text evidence="7">The expression of the ergot alkaloid synthesis cluster which leads to the synthesis of fumigaclavines is positively regulated by the brlA and stuA transcription factors (PubMed:19028996).</text>
</comment>
<comment type="disruption phenotype">
    <text evidence="12">Blocks the ergot alkaloid pathway at festuclavine, and downstream products are eliminated (PubMed:26972831).</text>
</comment>
<comment type="biotechnology">
    <text evidence="15">Ergot alkaloids are known for their toxic effects on humans who consume contaminated grains or livestock that graze on grasses harboring ergot alkaloid-producing fungi (PubMed:19523108). Due to their strong affinity for monoamine neurotransmitter receptors they may also have clinical uses such as treatment of migraines, Parkinson's disease and cerebrovascular insufficiency (PubMed:19523108).</text>
</comment>
<comment type="similarity">
    <text evidence="14">Belongs to the cytochrome P450 family.</text>
</comment>
<feature type="chain" id="PRO_0000436409" description="Cytochrome P450 monooxygenase easM">
    <location>
        <begin position="1"/>
        <end position="519"/>
    </location>
</feature>
<feature type="transmembrane region" description="Helical" evidence="3">
    <location>
        <begin position="16"/>
        <end position="33"/>
    </location>
</feature>
<feature type="binding site" description="axial binding residue" evidence="2">
    <location>
        <position position="458"/>
    </location>
    <ligand>
        <name>heme</name>
        <dbReference type="ChEBI" id="CHEBI:30413"/>
    </ligand>
    <ligandPart>
        <name>Fe</name>
        <dbReference type="ChEBI" id="CHEBI:18248"/>
    </ligandPart>
</feature>
<feature type="glycosylation site" description="N-linked (GlcNAc...) asparagine" evidence="4">
    <location>
        <position position="50"/>
    </location>
</feature>
<feature type="glycosylation site" description="N-linked (GlcNAc...) asparagine" evidence="4">
    <location>
        <position position="353"/>
    </location>
</feature>
<protein>
    <recommendedName>
        <fullName evidence="14">Cytochrome P450 monooxygenase easM</fullName>
        <ecNumber evidence="12">1.-.-.-</ecNumber>
    </recommendedName>
    <alternativeName>
        <fullName evidence="13">Ergot alkaloid synthesis protein M</fullName>
    </alternativeName>
</protein>
<dbReference type="EC" id="1.-.-.-" evidence="12"/>
<dbReference type="EMBL" id="AAHF01000001">
    <property type="protein sequence ID" value="EAL94100.1"/>
    <property type="molecule type" value="Genomic_DNA"/>
</dbReference>
<dbReference type="RefSeq" id="XP_756138.1">
    <property type="nucleotide sequence ID" value="XM_751045.1"/>
</dbReference>
<dbReference type="SMR" id="Q4WZ65"/>
<dbReference type="STRING" id="330879.Q4WZ65"/>
<dbReference type="GlyCosmos" id="Q4WZ65">
    <property type="glycosylation" value="2 sites, No reported glycans"/>
</dbReference>
<dbReference type="EnsemblFungi" id="EAL94100">
    <property type="protein sequence ID" value="EAL94100"/>
    <property type="gene ID" value="AFUA_2G18010"/>
</dbReference>
<dbReference type="GeneID" id="3512713"/>
<dbReference type="KEGG" id="afm:AFUA_2G18010"/>
<dbReference type="VEuPathDB" id="FungiDB:Afu2g18010"/>
<dbReference type="eggNOG" id="KOG0159">
    <property type="taxonomic scope" value="Eukaryota"/>
</dbReference>
<dbReference type="HOGENOM" id="CLU_022195_0_3_1"/>
<dbReference type="InParanoid" id="Q4WZ65"/>
<dbReference type="OMA" id="IEWFERT"/>
<dbReference type="OrthoDB" id="1844152at2759"/>
<dbReference type="UniPathway" id="UPA00327"/>
<dbReference type="Proteomes" id="UP000002530">
    <property type="component" value="Chromosome 2"/>
</dbReference>
<dbReference type="GO" id="GO:0016020">
    <property type="term" value="C:membrane"/>
    <property type="evidence" value="ECO:0007669"/>
    <property type="project" value="UniProtKB-SubCell"/>
</dbReference>
<dbReference type="GO" id="GO:0020037">
    <property type="term" value="F:heme binding"/>
    <property type="evidence" value="ECO:0007669"/>
    <property type="project" value="InterPro"/>
</dbReference>
<dbReference type="GO" id="GO:0005506">
    <property type="term" value="F:iron ion binding"/>
    <property type="evidence" value="ECO:0007669"/>
    <property type="project" value="InterPro"/>
</dbReference>
<dbReference type="GO" id="GO:0004497">
    <property type="term" value="F:monooxygenase activity"/>
    <property type="evidence" value="ECO:0007669"/>
    <property type="project" value="UniProtKB-KW"/>
</dbReference>
<dbReference type="GO" id="GO:0016705">
    <property type="term" value="F:oxidoreductase activity, acting on paired donors, with incorporation or reduction of molecular oxygen"/>
    <property type="evidence" value="ECO:0007669"/>
    <property type="project" value="InterPro"/>
</dbReference>
<dbReference type="GO" id="GO:0035837">
    <property type="term" value="P:ergot alkaloid biosynthetic process"/>
    <property type="evidence" value="ECO:0000317"/>
    <property type="project" value="AspGD"/>
</dbReference>
<dbReference type="GO" id="GO:1900809">
    <property type="term" value="P:fumigaclavine C biosynthetic process"/>
    <property type="evidence" value="ECO:0000314"/>
    <property type="project" value="GO_Central"/>
</dbReference>
<dbReference type="CDD" id="cd11041">
    <property type="entry name" value="CYP503A1-like"/>
    <property type="match status" value="1"/>
</dbReference>
<dbReference type="FunFam" id="1.10.630.10:FF:000059">
    <property type="entry name" value="Cytochrome P450 monooxygenase"/>
    <property type="match status" value="1"/>
</dbReference>
<dbReference type="Gene3D" id="1.10.630.10">
    <property type="entry name" value="Cytochrome P450"/>
    <property type="match status" value="1"/>
</dbReference>
<dbReference type="InterPro" id="IPR001128">
    <property type="entry name" value="Cyt_P450"/>
</dbReference>
<dbReference type="InterPro" id="IPR017972">
    <property type="entry name" value="Cyt_P450_CS"/>
</dbReference>
<dbReference type="InterPro" id="IPR002403">
    <property type="entry name" value="Cyt_P450_E_grp-IV"/>
</dbReference>
<dbReference type="InterPro" id="IPR036396">
    <property type="entry name" value="Cyt_P450_sf"/>
</dbReference>
<dbReference type="PANTHER" id="PTHR46206">
    <property type="entry name" value="CYTOCHROME P450"/>
    <property type="match status" value="1"/>
</dbReference>
<dbReference type="PANTHER" id="PTHR46206:SF2">
    <property type="entry name" value="CYTOCHROME P450 MONOOXYGENASE AUSG-RELATED"/>
    <property type="match status" value="1"/>
</dbReference>
<dbReference type="Pfam" id="PF00067">
    <property type="entry name" value="p450"/>
    <property type="match status" value="1"/>
</dbReference>
<dbReference type="PRINTS" id="PR00465">
    <property type="entry name" value="EP450IV"/>
</dbReference>
<dbReference type="SUPFAM" id="SSF48264">
    <property type="entry name" value="Cytochrome P450"/>
    <property type="match status" value="1"/>
</dbReference>
<dbReference type="PROSITE" id="PS00086">
    <property type="entry name" value="CYTOCHROME_P450"/>
    <property type="match status" value="1"/>
</dbReference>
<reference key="1">
    <citation type="journal article" date="2005" name="Nature">
        <title>Genomic sequence of the pathogenic and allergenic filamentous fungus Aspergillus fumigatus.</title>
        <authorList>
            <person name="Nierman W.C."/>
            <person name="Pain A."/>
            <person name="Anderson M.J."/>
            <person name="Wortman J.R."/>
            <person name="Kim H.S."/>
            <person name="Arroyo J."/>
            <person name="Berriman M."/>
            <person name="Abe K."/>
            <person name="Archer D.B."/>
            <person name="Bermejo C."/>
            <person name="Bennett J.W."/>
            <person name="Bowyer P."/>
            <person name="Chen D."/>
            <person name="Collins M."/>
            <person name="Coulsen R."/>
            <person name="Davies R."/>
            <person name="Dyer P.S."/>
            <person name="Farman M.L."/>
            <person name="Fedorova N."/>
            <person name="Fedorova N.D."/>
            <person name="Feldblyum T.V."/>
            <person name="Fischer R."/>
            <person name="Fosker N."/>
            <person name="Fraser A."/>
            <person name="Garcia J.L."/>
            <person name="Garcia M.J."/>
            <person name="Goble A."/>
            <person name="Goldman G.H."/>
            <person name="Gomi K."/>
            <person name="Griffith-Jones S."/>
            <person name="Gwilliam R."/>
            <person name="Haas B.J."/>
            <person name="Haas H."/>
            <person name="Harris D.E."/>
            <person name="Horiuchi H."/>
            <person name="Huang J."/>
            <person name="Humphray S."/>
            <person name="Jimenez J."/>
            <person name="Keller N."/>
            <person name="Khouri H."/>
            <person name="Kitamoto K."/>
            <person name="Kobayashi T."/>
            <person name="Konzack S."/>
            <person name="Kulkarni R."/>
            <person name="Kumagai T."/>
            <person name="Lafton A."/>
            <person name="Latge J.-P."/>
            <person name="Li W."/>
            <person name="Lord A."/>
            <person name="Lu C."/>
            <person name="Majoros W.H."/>
            <person name="May G.S."/>
            <person name="Miller B.L."/>
            <person name="Mohamoud Y."/>
            <person name="Molina M."/>
            <person name="Monod M."/>
            <person name="Mouyna I."/>
            <person name="Mulligan S."/>
            <person name="Murphy L.D."/>
            <person name="O'Neil S."/>
            <person name="Paulsen I."/>
            <person name="Penalva M.A."/>
            <person name="Pertea M."/>
            <person name="Price C."/>
            <person name="Pritchard B.L."/>
            <person name="Quail M.A."/>
            <person name="Rabbinowitsch E."/>
            <person name="Rawlins N."/>
            <person name="Rajandream M.A."/>
            <person name="Reichard U."/>
            <person name="Renauld H."/>
            <person name="Robson G.D."/>
            <person name="Rodriguez de Cordoba S."/>
            <person name="Rodriguez-Pena J.M."/>
            <person name="Ronning C.M."/>
            <person name="Rutter S."/>
            <person name="Salzberg S.L."/>
            <person name="Sanchez M."/>
            <person name="Sanchez-Ferrero J.C."/>
            <person name="Saunders D."/>
            <person name="Seeger K."/>
            <person name="Squares R."/>
            <person name="Squares S."/>
            <person name="Takeuchi M."/>
            <person name="Tekaia F."/>
            <person name="Turner G."/>
            <person name="Vazquez de Aldana C.R."/>
            <person name="Weidman J."/>
            <person name="White O."/>
            <person name="Woodward J.R."/>
            <person name="Yu J.-H."/>
            <person name="Fraser C.M."/>
            <person name="Galagan J.E."/>
            <person name="Asai K."/>
            <person name="Machida M."/>
            <person name="Hall N."/>
            <person name="Barrell B.G."/>
            <person name="Denning D.W."/>
        </authorList>
    </citation>
    <scope>NUCLEOTIDE SEQUENCE [LARGE SCALE GENOMIC DNA]</scope>
    <source>
        <strain>ATCC MYA-4609 / CBS 101355 / FGSC A1100 / Af293</strain>
    </source>
</reference>
<reference key="2">
    <citation type="journal article" date="2005" name="Appl. Environ. Microbiol.">
        <title>An ergot alkaloid biosynthesis gene and clustered hypothetical genes from Aspergillus fumigatus.</title>
        <authorList>
            <person name="Coyle C.M."/>
            <person name="Panaccione D.G."/>
        </authorList>
    </citation>
    <scope>IDENTIFICATION</scope>
    <scope>FUNCTION</scope>
</reference>
<reference key="3">
    <citation type="journal article" date="2005" name="Microbiology">
        <title>Overproduction, purification and characterization of FgaPT2, a dimethylallyltryptophan synthase from Aspergillus fumigatus.</title>
        <authorList>
            <person name="Unsoeld I.A."/>
            <person name="Li S.-M."/>
        </authorList>
    </citation>
    <scope>FUNCTION</scope>
</reference>
<reference key="4">
    <citation type="journal article" date="2009" name="ChemBioChem">
        <title>Ergot alkaloid biosynthesis in Aspergillus fumigatus: FgaAT catalyses the acetylation of fumigaclavine B.</title>
        <authorList>
            <person name="Liu X."/>
            <person name="Wang L."/>
            <person name="Steffan N."/>
            <person name="Yin W.B."/>
            <person name="Li S.M."/>
        </authorList>
    </citation>
    <scope>FUNCTION</scope>
</reference>
<reference key="5">
    <citation type="journal article" date="2009" name="Eukaryot. Cell">
        <title>Transcriptional profiling identifies a role for BrlA in the response to nitrogen depletion and for StuA in the regulation of secondary metabolite clusters in Aspergillus fumigatus.</title>
        <authorList>
            <person name="Twumasi-Boateng K."/>
            <person name="Yu Y."/>
            <person name="Chen D."/>
            <person name="Gravelat F.N."/>
            <person name="Nierman W.C."/>
            <person name="Sheppard D.C."/>
        </authorList>
    </citation>
    <scope>INDUCTION</scope>
</reference>
<reference key="6">
    <citation type="journal article" date="2009" name="Mol. Plant Pathol.">
        <title>Ergot: from witchcraft to biotechnology.</title>
        <authorList>
            <person name="Haarmann T."/>
            <person name="Rolke Y."/>
            <person name="Giesbert S."/>
            <person name="Tudzynski P."/>
        </authorList>
    </citation>
    <scope>BIOTECHNOLOGY</scope>
</reference>
<reference key="7">
    <citation type="journal article" date="2010" name="Arch. Microbiol.">
        <title>Ergot alkaloid biosynthesis in Aspergillus fumigatus: conversion of chanoclavine-I to chanoclavine-I aldehyde catalyzed by a short-chain alcohol dehydrogenase FgaDH.</title>
        <authorList>
            <person name="Wallwey C."/>
            <person name="Matuschek M."/>
            <person name="Li S.M."/>
        </authorList>
    </citation>
    <scope>FUNCTION</scope>
</reference>
<reference key="8">
    <citation type="journal article" date="2010" name="Org. Biomol. Chem.">
        <title>Ergot alkaloid biosynthesis in Aspergillus fumigatus: Conversion of chanoclavine-I aldehyde to festuclavine by the festuclavine synthase FgaFS in the presence of the old yellow enzyme FgaOx3.</title>
        <authorList>
            <person name="Wallwey C."/>
            <person name="Matuschek M."/>
            <person name="Xie X.L."/>
            <person name="Li S.M."/>
        </authorList>
    </citation>
    <scope>FUNCTION</scope>
</reference>
<reference key="9">
    <citation type="journal article" date="2011" name="Curr. Genet.">
        <title>Ergot cluster-encoded catalase is required for synthesis of chanoclavine-I in Aspergillus fumigatus.</title>
        <authorList>
            <person name="Goetz K.E."/>
            <person name="Coyle C.M."/>
            <person name="Cheng J.Z."/>
            <person name="O'Connor S.E."/>
            <person name="Panaccione D.G."/>
        </authorList>
    </citation>
    <scope>FUNCTION</scope>
</reference>
<reference key="10">
    <citation type="journal article" date="2012" name="Mycologia">
        <title>Chemotypic and genotypic diversity in the ergot alkaloid pathway of Aspergillus fumigatus.</title>
        <authorList>
            <person name="Robinson S.L."/>
            <person name="Panaccione D.G."/>
        </authorList>
    </citation>
    <scope>IDENTIFICATION</scope>
    <scope>NOMENCLATURE</scope>
</reference>
<reference key="11">
    <citation type="journal article" date="2016" name="Curr. Genet.">
        <title>Functional analysis of the gene controlling hydroxylation of festuclavine in the ergot alkaloid pathway of Neosartorya fumigata.</title>
        <authorList>
            <person name="Bilovol Y."/>
            <person name="Panaccione D.G."/>
        </authorList>
    </citation>
    <scope>FUNCTION</scope>
    <scope>CATALYTIC ACTIVITY</scope>
    <scope>DISRUPTION PHENOTYPE</scope>
</reference>
<proteinExistence type="evidence at protein level"/>
<gene>
    <name evidence="13" type="primary">easM</name>
    <name type="ORF">AFUA_2G18010</name>
</gene>
<organism>
    <name type="scientific">Aspergillus fumigatus (strain ATCC MYA-4609 / CBS 101355 / FGSC A1100 / Af293)</name>
    <name type="common">Neosartorya fumigata</name>
    <dbReference type="NCBI Taxonomy" id="330879"/>
    <lineage>
        <taxon>Eukaryota</taxon>
        <taxon>Fungi</taxon>
        <taxon>Dikarya</taxon>
        <taxon>Ascomycota</taxon>
        <taxon>Pezizomycotina</taxon>
        <taxon>Eurotiomycetes</taxon>
        <taxon>Eurotiomycetidae</taxon>
        <taxon>Eurotiales</taxon>
        <taxon>Aspergillaceae</taxon>
        <taxon>Aspergillus</taxon>
        <taxon>Aspergillus subgen. Fumigati</taxon>
    </lineage>
</organism>
<sequence length="519" mass="58532">MDFLQRILGILSSEDVAPALFASSISVLFLILSYQVLYPPSKYSAFPTINGTRWLALSNRRILAEFVTDAQGLMRNGLEKYDIFRIISSIGPMTILHPKYTDEIHNDRQLNFMAVLAKEMFPNYPGFDLFREGTDGSTVLQDAVKFGSSRCLGKSTQLLSDETSTLLQKLWGDEPEWHEVTAKSSVHDIIAHLSALLFYGPELCSHKEWLEVTDEYASVGFLAARQLRLWPPILRPIAQWFLPACRRLRYLASRTRGLIEPVIAARQKEKAICYSHGRQPPVYDDAIEWTERAAKGRPYDAAMSPLLFSINALHTTTDLLTQVILDLSTQPDLIVALRQEILSVKPQQNGWKNASLNQLLLMDSAIKESQRLKPTESILMRRYAMDDLTLADGNKIPKGTVLGIPIFGMRDPKIYVDPDMYDGYRFQKMRDKPGFENKCQLVSTSPWHLGFGHGIHACPGRFLAAVQVKIILCYIVAKYDFKLAGGAPPKVQSVGIELISDTEARLAVRRRQEMVIGLE</sequence>
<accession>Q4WZ65</accession>